<name>KR271_HUMAN</name>
<dbReference type="EMBL" id="AB096937">
    <property type="protein sequence ID" value="BAE46352.1"/>
    <property type="molecule type" value="mRNA"/>
</dbReference>
<dbReference type="CCDS" id="CCDS33532.1"/>
<dbReference type="RefSeq" id="NP_001071179.1">
    <property type="nucleotide sequence ID" value="NM_001077711.1"/>
</dbReference>
<dbReference type="FunCoup" id="Q3LI81">
    <property type="interactions" value="22"/>
</dbReference>
<dbReference type="STRING" id="9606.ENSP00000372286"/>
<dbReference type="GlyCosmos" id="Q3LI81">
    <property type="glycosylation" value="2 sites, 1 glycan"/>
</dbReference>
<dbReference type="GlyGen" id="Q3LI81">
    <property type="glycosylation" value="2 sites, 1 O-linked glycan (2 sites)"/>
</dbReference>
<dbReference type="iPTMnet" id="Q3LI81"/>
<dbReference type="BioMuta" id="KRTAP27-1"/>
<dbReference type="DMDM" id="121942690"/>
<dbReference type="PaxDb" id="9606-ENSP00000372286"/>
<dbReference type="Antibodypedia" id="6608">
    <property type="antibodies" value="24 antibodies from 12 providers"/>
</dbReference>
<dbReference type="DNASU" id="643812"/>
<dbReference type="Ensembl" id="ENST00000382835.2">
    <property type="protein sequence ID" value="ENSP00000372286.2"/>
    <property type="gene ID" value="ENSG00000206107.2"/>
</dbReference>
<dbReference type="GeneID" id="643812"/>
<dbReference type="KEGG" id="hsa:643812"/>
<dbReference type="MANE-Select" id="ENST00000382835.2">
    <property type="protein sequence ID" value="ENSP00000372286.2"/>
    <property type="RefSeq nucleotide sequence ID" value="NM_001077711.1"/>
    <property type="RefSeq protein sequence ID" value="NP_001071179.1"/>
</dbReference>
<dbReference type="UCSC" id="uc002ynx.1">
    <property type="organism name" value="human"/>
</dbReference>
<dbReference type="AGR" id="HGNC:33864"/>
<dbReference type="CTD" id="643812"/>
<dbReference type="GeneCards" id="KRTAP27-1"/>
<dbReference type="HGNC" id="HGNC:33864">
    <property type="gene designation" value="KRTAP27-1"/>
</dbReference>
<dbReference type="HPA" id="ENSG00000206107">
    <property type="expression patterns" value="Not detected"/>
</dbReference>
<dbReference type="neXtProt" id="NX_Q3LI81"/>
<dbReference type="PharmGKB" id="PA162393770"/>
<dbReference type="VEuPathDB" id="HostDB:ENSG00000206107"/>
<dbReference type="eggNOG" id="KOG4726">
    <property type="taxonomic scope" value="Eukaryota"/>
</dbReference>
<dbReference type="GeneTree" id="ENSGT00730000111539"/>
<dbReference type="HOGENOM" id="CLU_1312717_0_0_1"/>
<dbReference type="InParanoid" id="Q3LI81"/>
<dbReference type="OMA" id="SFHNAPP"/>
<dbReference type="OrthoDB" id="9832400at2759"/>
<dbReference type="PAN-GO" id="Q3LI81">
    <property type="GO annotations" value="0 GO annotations based on evolutionary models"/>
</dbReference>
<dbReference type="PhylomeDB" id="Q3LI81"/>
<dbReference type="TreeFam" id="TF337331"/>
<dbReference type="PathwayCommons" id="Q3LI81"/>
<dbReference type="Reactome" id="R-HSA-6805567">
    <property type="pathway name" value="Keratinization"/>
</dbReference>
<dbReference type="BioGRID-ORCS" id="643812">
    <property type="hits" value="9 hits in 1131 CRISPR screens"/>
</dbReference>
<dbReference type="GenomeRNAi" id="643812"/>
<dbReference type="Pharos" id="Q3LI81">
    <property type="development level" value="Tdark"/>
</dbReference>
<dbReference type="PRO" id="PR:Q3LI81"/>
<dbReference type="Proteomes" id="UP000005640">
    <property type="component" value="Chromosome 21"/>
</dbReference>
<dbReference type="RNAct" id="Q3LI81">
    <property type="molecule type" value="protein"/>
</dbReference>
<dbReference type="Bgee" id="ENSG00000206107">
    <property type="expression patterns" value="Expressed in primordial germ cell in gonad and 1 other cell type or tissue"/>
</dbReference>
<dbReference type="GO" id="GO:0005829">
    <property type="term" value="C:cytosol"/>
    <property type="evidence" value="ECO:0000304"/>
    <property type="project" value="Reactome"/>
</dbReference>
<dbReference type="GO" id="GO:0045095">
    <property type="term" value="C:keratin filament"/>
    <property type="evidence" value="ECO:0007669"/>
    <property type="project" value="InterPro"/>
</dbReference>
<dbReference type="GO" id="GO:0005198">
    <property type="term" value="F:structural molecule activity"/>
    <property type="evidence" value="ECO:0007669"/>
    <property type="project" value="InterPro"/>
</dbReference>
<dbReference type="InterPro" id="IPR007659">
    <property type="entry name" value="Keratin_matx"/>
</dbReference>
<dbReference type="InterPro" id="IPR007951">
    <property type="entry name" value="KRTAP_PMG"/>
</dbReference>
<dbReference type="PANTHER" id="PTHR23260">
    <property type="entry name" value="KERATIN ASSOCIATED PROTEIN 3-3-RELATED"/>
    <property type="match status" value="1"/>
</dbReference>
<dbReference type="PANTHER" id="PTHR23260:SF8">
    <property type="entry name" value="KERATIN-ASSOCIATED PROTEIN"/>
    <property type="match status" value="1"/>
</dbReference>
<dbReference type="Pfam" id="PF05287">
    <property type="entry name" value="PMG"/>
    <property type="match status" value="1"/>
</dbReference>
<reference key="1">
    <citation type="submission" date="2002-11" db="EMBL/GenBank/DDBJ databases">
        <title>Identification of complete keratin-associated protein (KAP) gene cluster spanning 800 kb region on human chromosome 21q22.11.</title>
        <authorList>
            <person name="Obayashi I."/>
            <person name="Shibuya K."/>
            <person name="Minoshima S."/>
            <person name="Kudoh J."/>
            <person name="Shimizu N."/>
        </authorList>
    </citation>
    <scope>NUCLEOTIDE SEQUENCE [MRNA]</scope>
    <source>
        <tissue>Hair root</tissue>
    </source>
</reference>
<keyword id="KW-0416">Keratin</keyword>
<keyword id="KW-1185">Reference proteome</keyword>
<keyword id="KW-0677">Repeat</keyword>
<protein>
    <recommendedName>
        <fullName>Keratin-associated protein 27-1</fullName>
    </recommendedName>
</protein>
<proteinExistence type="evidence at transcript level"/>
<feature type="chain" id="PRO_0000307916" description="Keratin-associated protein 27-1">
    <location>
        <begin position="1"/>
        <end position="207"/>
    </location>
</feature>
<feature type="region of interest" description="Disordered" evidence="2">
    <location>
        <begin position="184"/>
        <end position="207"/>
    </location>
</feature>
<feature type="sequence variant" id="VAR_053479" description="In dbSNP:rs2244485.">
    <original>A</original>
    <variation>V</variation>
    <location>
        <position position="99"/>
    </location>
</feature>
<comment type="function">
    <text>In the hair cortex, hair keratin intermediate filaments are embedded in an interfilamentous matrix, consisting of hair keratin-associated proteins (KRTAP), which are essential for the formation of a rigid and resistant hair shaft through their extensive disulfide bond cross-linking with abundant cysteine residues of hair keratins. The matrix proteins include the high-sulfur and high-glycine-tyrosine keratins.</text>
</comment>
<comment type="subunit">
    <text evidence="1">Interacts with hair keratins.</text>
</comment>
<comment type="similarity">
    <text evidence="3">Belongs to the PMG family.</text>
</comment>
<accession>Q3LI81</accession>
<evidence type="ECO:0000250" key="1"/>
<evidence type="ECO:0000256" key="2">
    <source>
        <dbReference type="SAM" id="MobiDB-lite"/>
    </source>
</evidence>
<evidence type="ECO:0000305" key="3"/>
<gene>
    <name type="primary">KRTAP27-1</name>
    <name type="synonym">KAP27.1</name>
</gene>
<sequence>MPHSHCHSLRSFHNAPPLSAITHGTNPITFEDRLCLPSSFHSRTCFLDNFQETCNETTSCQMTNCEQDLFTDDSCVQSNCFPGVVQTTYSNSRPCERTACQSESSSAGLACVSQPCQSESTQQMGFVAQSCQPASLKGNSCPPKTSKSKNFETLERASSQCQCQSQNPESSSCRPLVNVAPEPQLLESSPGVEPTCCVTGGSQLPSK</sequence>
<organism>
    <name type="scientific">Homo sapiens</name>
    <name type="common">Human</name>
    <dbReference type="NCBI Taxonomy" id="9606"/>
    <lineage>
        <taxon>Eukaryota</taxon>
        <taxon>Metazoa</taxon>
        <taxon>Chordata</taxon>
        <taxon>Craniata</taxon>
        <taxon>Vertebrata</taxon>
        <taxon>Euteleostomi</taxon>
        <taxon>Mammalia</taxon>
        <taxon>Eutheria</taxon>
        <taxon>Euarchontoglires</taxon>
        <taxon>Primates</taxon>
        <taxon>Haplorrhini</taxon>
        <taxon>Catarrhini</taxon>
        <taxon>Hominidae</taxon>
        <taxon>Homo</taxon>
    </lineage>
</organism>